<geneLocation type="mitochondrion"/>
<sequence>MTNMRKSHPLIKIVNHSFIDLPAPSNISAWWNFGSLLGVCLGLQILTGLFLAMHYTADTTTAFSSVTHICRDVNYGWLIRYMHANGASMFFIFLYFHIGRGIYYGSYSFMNTWNIGVLLLFAVMATAFMGYVLPWGQMSFWGATVITNLLSAIPYIGPTLVEWIWGGFSVDKATLTRFFAFHFILPFIITAMVMIHLLFLHETGSNNPSGMNSDSDKIPFHPYYTIKDILGVLFMMITLMSLVMFTPDLLGDPDNYTPANPLNTPPHIKPEWYFLFAYAILRSIPNKLGGVLALVFSILILMLFPILHSSKQRSMSFRPLSQCLMWMLVANLLILTWIGGQPVEHPFITIGQLASVTYFFTILILMPSTALMENKLLKW</sequence>
<evidence type="ECO:0000250" key="1"/>
<evidence type="ECO:0000250" key="2">
    <source>
        <dbReference type="UniProtKB" id="P00157"/>
    </source>
</evidence>
<evidence type="ECO:0000255" key="3">
    <source>
        <dbReference type="PROSITE-ProRule" id="PRU00967"/>
    </source>
</evidence>
<evidence type="ECO:0000255" key="4">
    <source>
        <dbReference type="PROSITE-ProRule" id="PRU00968"/>
    </source>
</evidence>
<reference key="1">
    <citation type="journal article" date="1996" name="Mol. Phylogenet. Evol.">
        <title>The simultaneous diversification of South American echimyid rodents (Hystricognathi) based on complete cytochrome b sequences.</title>
        <authorList>
            <person name="Lara M.C."/>
            <person name="Patton J.L."/>
            <person name="da Silva M.N.F."/>
        </authorList>
    </citation>
    <scope>NUCLEOTIDE SEQUENCE [GENOMIC DNA]</scope>
</reference>
<keyword id="KW-0249">Electron transport</keyword>
<keyword id="KW-0349">Heme</keyword>
<keyword id="KW-0408">Iron</keyword>
<keyword id="KW-0472">Membrane</keyword>
<keyword id="KW-0479">Metal-binding</keyword>
<keyword id="KW-0496">Mitochondrion</keyword>
<keyword id="KW-0999">Mitochondrion inner membrane</keyword>
<keyword id="KW-0679">Respiratory chain</keyword>
<keyword id="KW-0812">Transmembrane</keyword>
<keyword id="KW-1133">Transmembrane helix</keyword>
<keyword id="KW-0813">Transport</keyword>
<keyword id="KW-0830">Ubiquinone</keyword>
<protein>
    <recommendedName>
        <fullName>Cytochrome b</fullName>
    </recommendedName>
    <alternativeName>
        <fullName>Complex III subunit 3</fullName>
    </alternativeName>
    <alternativeName>
        <fullName>Complex III subunit III</fullName>
    </alternativeName>
    <alternativeName>
        <fullName>Cytochrome b-c1 complex subunit 3</fullName>
    </alternativeName>
    <alternativeName>
        <fullName>Ubiquinol-cytochrome-c reductase complex cytochrome b subunit</fullName>
    </alternativeName>
</protein>
<proteinExistence type="inferred from homology"/>
<gene>
    <name type="primary">MT-CYB</name>
    <name type="synonym">COB</name>
    <name type="synonym">CYTB</name>
    <name type="synonym">MTCYB</name>
</gene>
<comment type="function">
    <text evidence="2">Component of the ubiquinol-cytochrome c reductase complex (complex III or cytochrome b-c1 complex) that is part of the mitochondrial respiratory chain. The b-c1 complex mediates electron transfer from ubiquinol to cytochrome c. Contributes to the generation of a proton gradient across the mitochondrial membrane that is then used for ATP synthesis.</text>
</comment>
<comment type="cofactor">
    <cofactor evidence="2">
        <name>heme b</name>
        <dbReference type="ChEBI" id="CHEBI:60344"/>
    </cofactor>
    <text evidence="2">Binds 2 heme b groups non-covalently.</text>
</comment>
<comment type="subunit">
    <text evidence="2">The cytochrome bc1 complex contains 11 subunits: 3 respiratory subunits (MT-CYB, CYC1 and UQCRFS1), 2 core proteins (UQCRC1 and UQCRC2) and 6 low-molecular weight proteins (UQCRH/QCR6, UQCRB/QCR7, UQCRQ/QCR8, UQCR10/QCR9, UQCR11/QCR10 and a cleavage product of UQCRFS1). This cytochrome bc1 complex then forms a dimer.</text>
</comment>
<comment type="subcellular location">
    <subcellularLocation>
        <location evidence="2">Mitochondrion inner membrane</location>
        <topology evidence="2">Multi-pass membrane protein</topology>
    </subcellularLocation>
</comment>
<comment type="miscellaneous">
    <text evidence="1">Heme 1 (or BL or b562) is low-potential and absorbs at about 562 nm, and heme 2 (or BH or b566) is high-potential and absorbs at about 566 nm.</text>
</comment>
<comment type="similarity">
    <text evidence="3 4">Belongs to the cytochrome b family.</text>
</comment>
<comment type="caution">
    <text evidence="2">The full-length protein contains only eight transmembrane helices, not nine as predicted by bioinformatics tools.</text>
</comment>
<feature type="chain" id="PRO_0000255027" description="Cytochrome b">
    <location>
        <begin position="1"/>
        <end position="379"/>
    </location>
</feature>
<feature type="transmembrane region" description="Helical" evidence="2">
    <location>
        <begin position="33"/>
        <end position="53"/>
    </location>
</feature>
<feature type="transmembrane region" description="Helical" evidence="2">
    <location>
        <begin position="77"/>
        <end position="98"/>
    </location>
</feature>
<feature type="transmembrane region" description="Helical" evidence="2">
    <location>
        <begin position="113"/>
        <end position="133"/>
    </location>
</feature>
<feature type="transmembrane region" description="Helical" evidence="2">
    <location>
        <begin position="178"/>
        <end position="198"/>
    </location>
</feature>
<feature type="transmembrane region" description="Helical" evidence="2">
    <location>
        <begin position="226"/>
        <end position="246"/>
    </location>
</feature>
<feature type="transmembrane region" description="Helical" evidence="2">
    <location>
        <begin position="288"/>
        <end position="308"/>
    </location>
</feature>
<feature type="transmembrane region" description="Helical" evidence="2">
    <location>
        <begin position="320"/>
        <end position="340"/>
    </location>
</feature>
<feature type="transmembrane region" description="Helical" evidence="2">
    <location>
        <begin position="347"/>
        <end position="367"/>
    </location>
</feature>
<feature type="binding site" description="axial binding residue" evidence="2">
    <location>
        <position position="83"/>
    </location>
    <ligand>
        <name>heme b</name>
        <dbReference type="ChEBI" id="CHEBI:60344"/>
        <label>b562</label>
    </ligand>
    <ligandPart>
        <name>Fe</name>
        <dbReference type="ChEBI" id="CHEBI:18248"/>
    </ligandPart>
</feature>
<feature type="binding site" description="axial binding residue" evidence="2">
    <location>
        <position position="97"/>
    </location>
    <ligand>
        <name>heme b</name>
        <dbReference type="ChEBI" id="CHEBI:60344"/>
        <label>b566</label>
    </ligand>
    <ligandPart>
        <name>Fe</name>
        <dbReference type="ChEBI" id="CHEBI:18248"/>
    </ligandPart>
</feature>
<feature type="binding site" description="axial binding residue" evidence="2">
    <location>
        <position position="182"/>
    </location>
    <ligand>
        <name>heme b</name>
        <dbReference type="ChEBI" id="CHEBI:60344"/>
        <label>b562</label>
    </ligand>
    <ligandPart>
        <name>Fe</name>
        <dbReference type="ChEBI" id="CHEBI:18248"/>
    </ligandPart>
</feature>
<feature type="binding site" description="axial binding residue" evidence="2">
    <location>
        <position position="196"/>
    </location>
    <ligand>
        <name>heme b</name>
        <dbReference type="ChEBI" id="CHEBI:60344"/>
        <label>b566</label>
    </ligand>
    <ligandPart>
        <name>Fe</name>
        <dbReference type="ChEBI" id="CHEBI:18248"/>
    </ligandPart>
</feature>
<feature type="binding site" evidence="2">
    <location>
        <position position="201"/>
    </location>
    <ligand>
        <name>a ubiquinone</name>
        <dbReference type="ChEBI" id="CHEBI:16389"/>
    </ligand>
</feature>
<name>CYB_CTESO</name>
<dbReference type="EMBL" id="U34853">
    <property type="protein sequence ID" value="AAC52560.1"/>
    <property type="molecule type" value="Genomic_DNA"/>
</dbReference>
<dbReference type="SMR" id="Q34235"/>
<dbReference type="GO" id="GO:0005743">
    <property type="term" value="C:mitochondrial inner membrane"/>
    <property type="evidence" value="ECO:0007669"/>
    <property type="project" value="UniProtKB-SubCell"/>
</dbReference>
<dbReference type="GO" id="GO:0045275">
    <property type="term" value="C:respiratory chain complex III"/>
    <property type="evidence" value="ECO:0007669"/>
    <property type="project" value="InterPro"/>
</dbReference>
<dbReference type="GO" id="GO:0046872">
    <property type="term" value="F:metal ion binding"/>
    <property type="evidence" value="ECO:0007669"/>
    <property type="project" value="UniProtKB-KW"/>
</dbReference>
<dbReference type="GO" id="GO:0008121">
    <property type="term" value="F:ubiquinol-cytochrome-c reductase activity"/>
    <property type="evidence" value="ECO:0007669"/>
    <property type="project" value="InterPro"/>
</dbReference>
<dbReference type="GO" id="GO:0006122">
    <property type="term" value="P:mitochondrial electron transport, ubiquinol to cytochrome c"/>
    <property type="evidence" value="ECO:0007669"/>
    <property type="project" value="TreeGrafter"/>
</dbReference>
<dbReference type="CDD" id="cd00290">
    <property type="entry name" value="cytochrome_b_C"/>
    <property type="match status" value="1"/>
</dbReference>
<dbReference type="CDD" id="cd00284">
    <property type="entry name" value="Cytochrome_b_N"/>
    <property type="match status" value="1"/>
</dbReference>
<dbReference type="FunFam" id="1.20.810.10:FF:000002">
    <property type="entry name" value="Cytochrome b"/>
    <property type="match status" value="1"/>
</dbReference>
<dbReference type="Gene3D" id="1.20.810.10">
    <property type="entry name" value="Cytochrome Bc1 Complex, Chain C"/>
    <property type="match status" value="1"/>
</dbReference>
<dbReference type="InterPro" id="IPR005798">
    <property type="entry name" value="Cyt_b/b6_C"/>
</dbReference>
<dbReference type="InterPro" id="IPR036150">
    <property type="entry name" value="Cyt_b/b6_C_sf"/>
</dbReference>
<dbReference type="InterPro" id="IPR005797">
    <property type="entry name" value="Cyt_b/b6_N"/>
</dbReference>
<dbReference type="InterPro" id="IPR027387">
    <property type="entry name" value="Cytb/b6-like_sf"/>
</dbReference>
<dbReference type="InterPro" id="IPR030689">
    <property type="entry name" value="Cytochrome_b"/>
</dbReference>
<dbReference type="InterPro" id="IPR048260">
    <property type="entry name" value="Cytochrome_b_C_euk/bac"/>
</dbReference>
<dbReference type="InterPro" id="IPR048259">
    <property type="entry name" value="Cytochrome_b_N_euk/bac"/>
</dbReference>
<dbReference type="InterPro" id="IPR016174">
    <property type="entry name" value="Di-haem_cyt_TM"/>
</dbReference>
<dbReference type="PANTHER" id="PTHR19271">
    <property type="entry name" value="CYTOCHROME B"/>
    <property type="match status" value="1"/>
</dbReference>
<dbReference type="PANTHER" id="PTHR19271:SF16">
    <property type="entry name" value="CYTOCHROME B"/>
    <property type="match status" value="1"/>
</dbReference>
<dbReference type="Pfam" id="PF00032">
    <property type="entry name" value="Cytochrom_B_C"/>
    <property type="match status" value="1"/>
</dbReference>
<dbReference type="Pfam" id="PF00033">
    <property type="entry name" value="Cytochrome_B"/>
    <property type="match status" value="1"/>
</dbReference>
<dbReference type="PIRSF" id="PIRSF038885">
    <property type="entry name" value="COB"/>
    <property type="match status" value="1"/>
</dbReference>
<dbReference type="SUPFAM" id="SSF81648">
    <property type="entry name" value="a domain/subunit of cytochrome bc1 complex (Ubiquinol-cytochrome c reductase)"/>
    <property type="match status" value="1"/>
</dbReference>
<dbReference type="SUPFAM" id="SSF81342">
    <property type="entry name" value="Transmembrane di-heme cytochromes"/>
    <property type="match status" value="1"/>
</dbReference>
<dbReference type="PROSITE" id="PS51003">
    <property type="entry name" value="CYTB_CTER"/>
    <property type="match status" value="1"/>
</dbReference>
<dbReference type="PROSITE" id="PS51002">
    <property type="entry name" value="CYTB_NTER"/>
    <property type="match status" value="1"/>
</dbReference>
<accession>Q34235</accession>
<organism>
    <name type="scientific">Ctenomys sociabilis</name>
    <name type="common">Social tuco-tuco</name>
    <dbReference type="NCBI Taxonomy" id="43321"/>
    <lineage>
        <taxon>Eukaryota</taxon>
        <taxon>Metazoa</taxon>
        <taxon>Chordata</taxon>
        <taxon>Craniata</taxon>
        <taxon>Vertebrata</taxon>
        <taxon>Euteleostomi</taxon>
        <taxon>Mammalia</taxon>
        <taxon>Eutheria</taxon>
        <taxon>Euarchontoglires</taxon>
        <taxon>Glires</taxon>
        <taxon>Rodentia</taxon>
        <taxon>Hystricomorpha</taxon>
        <taxon>Ctenomyidae</taxon>
        <taxon>Ctenomys</taxon>
    </lineage>
</organism>